<feature type="signal peptide" evidence="1">
    <location>
        <begin position="1"/>
        <end position="26"/>
    </location>
</feature>
<feature type="propeptide" id="PRO_0000447064" evidence="5">
    <location>
        <begin position="27"/>
        <end position="52"/>
    </location>
</feature>
<feature type="chain" id="PRO_0000447065" description="U-myrmeciitoxin(01)-Mg1a" evidence="2">
    <location>
        <begin position="53"/>
        <end position="85"/>
    </location>
</feature>
<feature type="modified residue" description="Leucine amide" evidence="2">
    <location>
        <position position="85"/>
    </location>
</feature>
<name>TX11A_MYRGU</name>
<dbReference type="GO" id="GO:0005576">
    <property type="term" value="C:extracellular region"/>
    <property type="evidence" value="ECO:0007669"/>
    <property type="project" value="UniProtKB-SubCell"/>
</dbReference>
<dbReference type="GO" id="GO:0016020">
    <property type="term" value="C:membrane"/>
    <property type="evidence" value="ECO:0007669"/>
    <property type="project" value="UniProtKB-KW"/>
</dbReference>
<dbReference type="GO" id="GO:0044218">
    <property type="term" value="C:other organism cell membrane"/>
    <property type="evidence" value="ECO:0007669"/>
    <property type="project" value="UniProtKB-KW"/>
</dbReference>
<dbReference type="GO" id="GO:0090729">
    <property type="term" value="F:toxin activity"/>
    <property type="evidence" value="ECO:0007669"/>
    <property type="project" value="UniProtKB-KW"/>
</dbReference>
<dbReference type="GO" id="GO:0042742">
    <property type="term" value="P:defense response to bacterium"/>
    <property type="evidence" value="ECO:0007669"/>
    <property type="project" value="UniProtKB-KW"/>
</dbReference>
<dbReference type="GO" id="GO:0031640">
    <property type="term" value="P:killing of cells of another organism"/>
    <property type="evidence" value="ECO:0007669"/>
    <property type="project" value="UniProtKB-KW"/>
</dbReference>
<dbReference type="InterPro" id="IPR049518">
    <property type="entry name" value="Pilosulin"/>
</dbReference>
<dbReference type="Pfam" id="PF17499">
    <property type="entry name" value="Pilosulin"/>
    <property type="match status" value="1"/>
</dbReference>
<reference key="1">
    <citation type="journal article" date="2018" name="Sci. Adv.">
        <title>A comprehensive portrait of the venom of the giant red bull ant, Myrmecia gulosa, reveals a hyperdiverse hymenopteran toxin gene family.</title>
        <authorList>
            <person name="Robinson S.D."/>
            <person name="Mueller A."/>
            <person name="Clayton D."/>
            <person name="Starobova H."/>
            <person name="Hamilton B.R."/>
            <person name="Payne R.J."/>
            <person name="Vetter I."/>
            <person name="King G.F."/>
            <person name="Undheim E.A.B."/>
        </authorList>
    </citation>
    <scope>NUCLEOTIDE SEQUENCE [MRNA]</scope>
    <scope>FUNCTION</scope>
    <scope>MASS SPECTROMETRY</scope>
    <scope>AMIDATION AT LEU-85</scope>
    <scope>SUBCELLULAR LOCATION</scope>
    <scope>TISSUE SPECIFICITY</scope>
    <scope>SYNTHESIS</scope>
    <scope>BIOASSAY</scope>
    <source>
        <tissue>Venom</tissue>
        <tissue>Venom gland</tissue>
    </source>
</reference>
<protein>
    <recommendedName>
        <fullName evidence="4">U-myrmeciitoxin(01)-Mg1a</fullName>
        <shortName evidence="3">MIITX(01)-Mg1a</shortName>
        <shortName evidence="4">U-MIITX(01)-Mg1a</shortName>
    </recommendedName>
</protein>
<keyword id="KW-0027">Amidation</keyword>
<keyword id="KW-0044">Antibiotic</keyword>
<keyword id="KW-0929">Antimicrobial</keyword>
<keyword id="KW-0204">Cytolysis</keyword>
<keyword id="KW-0472">Membrane</keyword>
<keyword id="KW-0964">Secreted</keyword>
<keyword id="KW-0732">Signal</keyword>
<keyword id="KW-1052">Target cell membrane</keyword>
<keyword id="KW-1053">Target membrane</keyword>
<keyword id="KW-0800">Toxin</keyword>
<accession>P0DSJ4</accession>
<comment type="function">
    <text evidence="2">Toxin that may interact with target cell membranes, producing a concentration-dependent leak in ion conductance, possibly via multimeric pore formation (Probable). It produces an immediate sharp increase of calcium concentration in all DRG neurons (PubMed:30214940). This influx in calcium stabilizes without resulting in any observable dye leakage, showing that the effect is not simply cytolytic (PubMed:30214940). This toxin may be one of the major contributors to the pain associated with envenomation (PubMed:30214940). The toxin also displays a weak cytotoxicity (on HEK cells) and some antimicrobial activity (MIC=2.5 uM on C.neoformans (var. grubii), MIC=10.2 uM on S.aureus), but is not hemolytic to human erythtrocytes (PubMed:30214940). In vivo, intraplantar injection into mice causes spontaneous nocifensive behavior (licking, flinching, or shaking of the paw), which lasts 5-7 minutes (10 and 100 uM tested). Mechanical and heat hypoalgesia are observed at 20 and 25 minutes after injection (highest dose tested of 100 uM) (PubMed:30214940). In vivo, injection into crickets (A.domesticus) causes an immediate, dose-dependent, reversible and nonlethal incapacitation that lasts about 53 minutes at the highest dose tested (60 ug/g) (PubMed:30214940).</text>
</comment>
<comment type="subcellular location">
    <subcellularLocation>
        <location evidence="2">Secreted</location>
    </subcellularLocation>
    <subcellularLocation>
        <location evidence="5">Target cell membrane</location>
    </subcellularLocation>
</comment>
<comment type="tissue specificity">
    <text evidence="2">Expressed by the venom gland (PubMed:30214940). This toxin is detected along the entire venom gland, as well as in the venom reservoir, the venom duct and in the venom. No toxin are detected in the Dufour's gland (PubMed:30214940).</text>
</comment>
<comment type="mass spectrometry"/>
<comment type="miscellaneous">
    <text evidence="2">Negative results: does not act directly on human Nav1.7/SCN9A voltage-gated sodium channels.</text>
</comment>
<comment type="similarity">
    <text evidence="4">Belongs to the formicidae venom precursor-01 superfamily.</text>
</comment>
<comment type="online information" name="National Center for Biotechnology Information (NCBI)">
    <link uri="https://www.ncbi.nlm.nih.gov/nuccore/GGFG01000001"/>
</comment>
<sequence>MKLLYLLLTLAIIFVLTIVHAPNVEAKALADPESDAVGFADAFGDADAEATGGLGRLIGKIAKKGAKIAAEAAANAAAEKAAEALG</sequence>
<evidence type="ECO:0000255" key="1"/>
<evidence type="ECO:0000269" key="2">
    <source>
    </source>
</evidence>
<evidence type="ECO:0000303" key="3">
    <source>
    </source>
</evidence>
<evidence type="ECO:0000305" key="4"/>
<evidence type="ECO:0000305" key="5">
    <source>
    </source>
</evidence>
<proteinExistence type="evidence at protein level"/>
<organism>
    <name type="scientific">Myrmecia gulosa</name>
    <name type="common">Red bulldog ant</name>
    <dbReference type="NCBI Taxonomy" id="36170"/>
    <lineage>
        <taxon>Eukaryota</taxon>
        <taxon>Metazoa</taxon>
        <taxon>Ecdysozoa</taxon>
        <taxon>Arthropoda</taxon>
        <taxon>Hexapoda</taxon>
        <taxon>Insecta</taxon>
        <taxon>Pterygota</taxon>
        <taxon>Neoptera</taxon>
        <taxon>Endopterygota</taxon>
        <taxon>Hymenoptera</taxon>
        <taxon>Apocrita</taxon>
        <taxon>Aculeata</taxon>
        <taxon>Formicoidea</taxon>
        <taxon>Formicidae</taxon>
        <taxon>Myrmeciinae</taxon>
        <taxon>Myrmeciini</taxon>
        <taxon>Myrmecia</taxon>
    </lineage>
</organism>